<accession>C1DNG2</accession>
<proteinExistence type="inferred from homology"/>
<sequence length="224" mass="24814">MNGMWALLRLASPQLPIGGYSYSQGLELAIERGLVCDPPTARRWLEDQLLLNLARFEAPLLLAQCRAAADGDWTALEALAERHRASRETRELHLESRQMGFSLRQLLEDLPELDEPSRAVFARLVEPGLAPAWALAARAWGIAPEDALAAWLWSWLENQLAVLMKSLPLGQQAAQRLTSALLPALGQAQRTACAHAPDDWGTVAFGLTLASMAHERQYSRLFRS</sequence>
<gene>
    <name evidence="1" type="primary">ureF</name>
    <name type="ordered locus">Avin_09390</name>
</gene>
<dbReference type="EMBL" id="CP001157">
    <property type="protein sequence ID" value="ACO77178.1"/>
    <property type="molecule type" value="Genomic_DNA"/>
</dbReference>
<dbReference type="RefSeq" id="WP_012699603.1">
    <property type="nucleotide sequence ID" value="NC_012560.1"/>
</dbReference>
<dbReference type="SMR" id="C1DNG2"/>
<dbReference type="STRING" id="322710.Avin_09390"/>
<dbReference type="EnsemblBacteria" id="ACO77178">
    <property type="protein sequence ID" value="ACO77178"/>
    <property type="gene ID" value="Avin_09390"/>
</dbReference>
<dbReference type="GeneID" id="88184307"/>
<dbReference type="KEGG" id="avn:Avin_09390"/>
<dbReference type="eggNOG" id="COG0830">
    <property type="taxonomic scope" value="Bacteria"/>
</dbReference>
<dbReference type="HOGENOM" id="CLU_049215_2_1_6"/>
<dbReference type="OrthoDB" id="9798772at2"/>
<dbReference type="Proteomes" id="UP000002424">
    <property type="component" value="Chromosome"/>
</dbReference>
<dbReference type="GO" id="GO:0005737">
    <property type="term" value="C:cytoplasm"/>
    <property type="evidence" value="ECO:0007669"/>
    <property type="project" value="UniProtKB-SubCell"/>
</dbReference>
<dbReference type="GO" id="GO:0016151">
    <property type="term" value="F:nickel cation binding"/>
    <property type="evidence" value="ECO:0007669"/>
    <property type="project" value="UniProtKB-UniRule"/>
</dbReference>
<dbReference type="Gene3D" id="1.10.4190.10">
    <property type="entry name" value="Urease accessory protein UreF"/>
    <property type="match status" value="1"/>
</dbReference>
<dbReference type="HAMAP" id="MF_01385">
    <property type="entry name" value="UreF"/>
    <property type="match status" value="1"/>
</dbReference>
<dbReference type="InterPro" id="IPR002639">
    <property type="entry name" value="UreF"/>
</dbReference>
<dbReference type="InterPro" id="IPR038277">
    <property type="entry name" value="UreF_sf"/>
</dbReference>
<dbReference type="PANTHER" id="PTHR33620">
    <property type="entry name" value="UREASE ACCESSORY PROTEIN F"/>
    <property type="match status" value="1"/>
</dbReference>
<dbReference type="PANTHER" id="PTHR33620:SF1">
    <property type="entry name" value="UREASE ACCESSORY PROTEIN F"/>
    <property type="match status" value="1"/>
</dbReference>
<dbReference type="Pfam" id="PF01730">
    <property type="entry name" value="UreF"/>
    <property type="match status" value="1"/>
</dbReference>
<dbReference type="PIRSF" id="PIRSF009467">
    <property type="entry name" value="Ureas_acces_UreF"/>
    <property type="match status" value="1"/>
</dbReference>
<name>UREF_AZOVD</name>
<feature type="chain" id="PRO_1000215126" description="Urease accessory protein UreF">
    <location>
        <begin position="1"/>
        <end position="224"/>
    </location>
</feature>
<reference key="1">
    <citation type="journal article" date="2009" name="J. Bacteriol.">
        <title>Genome sequence of Azotobacter vinelandii, an obligate aerobe specialized to support diverse anaerobic metabolic processes.</title>
        <authorList>
            <person name="Setubal J.C."/>
            <person name="Dos Santos P."/>
            <person name="Goldman B.S."/>
            <person name="Ertesvaag H."/>
            <person name="Espin G."/>
            <person name="Rubio L.M."/>
            <person name="Valla S."/>
            <person name="Almeida N.F."/>
            <person name="Balasubramanian D."/>
            <person name="Cromes L."/>
            <person name="Curatti L."/>
            <person name="Du Z."/>
            <person name="Godsy E."/>
            <person name="Goodner B."/>
            <person name="Hellner-Burris K."/>
            <person name="Hernandez J.A."/>
            <person name="Houmiel K."/>
            <person name="Imperial J."/>
            <person name="Kennedy C."/>
            <person name="Larson T.J."/>
            <person name="Latreille P."/>
            <person name="Ligon L.S."/>
            <person name="Lu J."/>
            <person name="Maerk M."/>
            <person name="Miller N.M."/>
            <person name="Norton S."/>
            <person name="O'Carroll I.P."/>
            <person name="Paulsen I."/>
            <person name="Raulfs E.C."/>
            <person name="Roemer R."/>
            <person name="Rosser J."/>
            <person name="Segura D."/>
            <person name="Slater S."/>
            <person name="Stricklin S.L."/>
            <person name="Studholme D.J."/>
            <person name="Sun J."/>
            <person name="Viana C.J."/>
            <person name="Wallin E."/>
            <person name="Wang B."/>
            <person name="Wheeler C."/>
            <person name="Zhu H."/>
            <person name="Dean D.R."/>
            <person name="Dixon R."/>
            <person name="Wood D."/>
        </authorList>
    </citation>
    <scope>NUCLEOTIDE SEQUENCE [LARGE SCALE GENOMIC DNA]</scope>
    <source>
        <strain>DJ / ATCC BAA-1303</strain>
    </source>
</reference>
<organism>
    <name type="scientific">Azotobacter vinelandii (strain DJ / ATCC BAA-1303)</name>
    <dbReference type="NCBI Taxonomy" id="322710"/>
    <lineage>
        <taxon>Bacteria</taxon>
        <taxon>Pseudomonadati</taxon>
        <taxon>Pseudomonadota</taxon>
        <taxon>Gammaproteobacteria</taxon>
        <taxon>Pseudomonadales</taxon>
        <taxon>Pseudomonadaceae</taxon>
        <taxon>Azotobacter</taxon>
    </lineage>
</organism>
<evidence type="ECO:0000255" key="1">
    <source>
        <dbReference type="HAMAP-Rule" id="MF_01385"/>
    </source>
</evidence>
<keyword id="KW-0143">Chaperone</keyword>
<keyword id="KW-0963">Cytoplasm</keyword>
<keyword id="KW-0996">Nickel insertion</keyword>
<protein>
    <recommendedName>
        <fullName evidence="1">Urease accessory protein UreF</fullName>
    </recommendedName>
</protein>
<comment type="function">
    <text evidence="1">Required for maturation of urease via the functional incorporation of the urease nickel metallocenter.</text>
</comment>
<comment type="subunit">
    <text evidence="1">UreD, UreF and UreG form a complex that acts as a GTP-hydrolysis-dependent molecular chaperone, activating the urease apoprotein by helping to assemble the nickel containing metallocenter of UreC. The UreE protein probably delivers the nickel.</text>
</comment>
<comment type="subcellular location">
    <subcellularLocation>
        <location evidence="1">Cytoplasm</location>
    </subcellularLocation>
</comment>
<comment type="similarity">
    <text evidence="1">Belongs to the UreF family.</text>
</comment>